<comment type="function">
    <text evidence="1 4 5 7 11 12 15 16">Catalyzes the addition of GlcNAc or GlcUA monosaccharides to the nascent hyaluronan polymer (Probable) (PubMed:20507985, PubMed:21228273, PubMed:23303191, PubMed:32993960). Therefore, it is essential to hyaluronan synthesis a major component of most extracellular matrices that has a structural role in tissues architectures and regulates cell adhesion, migration and differentiation (PubMed:20507985, PubMed:21228273, PubMed:8798477). This is one of three isoenzymes responsible for cellular hyaluronan synthesis and it is particularly responsible for the synthesis of high molecular mass hyaluronan (By similarity).</text>
</comment>
<comment type="catalytic activity">
    <reaction evidence="4 5 7 11 15 16">
        <text>[hyaluronan](n) + UDP-N-acetyl-alpha-D-glucosamine = N-acetyl-beta-D-glucosaminyl-(1-&gt;4)-[hyaluronan](n) + UDP + H(+)</text>
        <dbReference type="Rhea" id="RHEA:20465"/>
        <dbReference type="Rhea" id="RHEA-COMP:12583"/>
        <dbReference type="Rhea" id="RHEA-COMP:12585"/>
        <dbReference type="ChEBI" id="CHEBI:15378"/>
        <dbReference type="ChEBI" id="CHEBI:57705"/>
        <dbReference type="ChEBI" id="CHEBI:58223"/>
        <dbReference type="ChEBI" id="CHEBI:132153"/>
        <dbReference type="ChEBI" id="CHEBI:132154"/>
        <dbReference type="EC" id="2.4.1.212"/>
    </reaction>
    <physiologicalReaction direction="left-to-right" evidence="14">
        <dbReference type="Rhea" id="RHEA:20466"/>
    </physiologicalReaction>
</comment>
<comment type="catalytic activity">
    <reaction evidence="4 5 7 11 15 16">
        <text>N-acetyl-beta-D-glucosaminyl-(1-&gt;4)-[hyaluronan](n) + UDP-alpha-D-glucuronate = [hyaluronan](n+1) + UDP + H(+)</text>
        <dbReference type="Rhea" id="RHEA:12528"/>
        <dbReference type="Rhea" id="RHEA-COMP:12585"/>
        <dbReference type="Rhea" id="RHEA-COMP:12587"/>
        <dbReference type="ChEBI" id="CHEBI:15378"/>
        <dbReference type="ChEBI" id="CHEBI:58052"/>
        <dbReference type="ChEBI" id="CHEBI:58223"/>
        <dbReference type="ChEBI" id="CHEBI:132153"/>
        <dbReference type="ChEBI" id="CHEBI:132154"/>
        <dbReference type="EC" id="2.4.1.212"/>
    </reaction>
    <physiologicalReaction direction="left-to-right" evidence="14">
        <dbReference type="Rhea" id="RHEA:12529"/>
    </physiologicalReaction>
</comment>
<comment type="cofactor">
    <cofactor>
        <name>Mg(2+)</name>
        <dbReference type="ChEBI" id="CHEBI:18420"/>
    </cofactor>
</comment>
<comment type="activity regulation">
    <text evidence="4 5 6 7 9 10 11">Regulated by several post-translational modifications such as ubiquitination/deubiquitination, phosphorylation and O-GlcNAcylation (PubMed:20507985, PubMed:21228273, PubMed:22887999, PubMed:28604766, PubMed:30394292, PubMed:32993960). The enzymatic activity depends on the availability of UDP-GlcUA and UDP-GlcNAc (PubMed:22887999, PubMed:23303191).</text>
</comment>
<comment type="pathway">
    <text evidence="4">Glycan biosynthesis; hyaluronan biosynthesis.</text>
</comment>
<comment type="subunit">
    <text evidence="4 8">Homodimer; dimerization promotes enzymatic activity (PubMed:20507985, PubMed:25795779). Forms heterodimer with HAS3 (PubMed:20507985, PubMed:25795779). Forms heterodimer with HAS1 (PubMed:25795779).</text>
</comment>
<comment type="interaction">
    <interactant intactId="EBI-16628852">
        <id>Q92819</id>
    </interactant>
    <interactant intactId="EBI-1052423">
        <id>Q92839</id>
        <label>HAS1</label>
    </interactant>
    <organismsDiffer>false</organismsDiffer>
    <experiments>9</experiments>
</comment>
<comment type="interaction">
    <interactant intactId="EBI-16628852">
        <id>Q92819</id>
    </interactant>
    <interactant intactId="EBI-16628799">
        <id>O00219</id>
        <label>HAS3</label>
    </interactant>
    <organismsDiffer>false</organismsDiffer>
    <experiments>10</experiments>
</comment>
<comment type="subcellular location">
    <subcellularLocation>
        <location evidence="6 8 10 12">Cell membrane</location>
        <topology evidence="2">Multi-pass membrane protein</topology>
    </subcellularLocation>
    <subcellularLocation>
        <location evidence="10">Endoplasmic reticulum membrane</location>
        <topology evidence="2">Multi-pass membrane protein</topology>
    </subcellularLocation>
    <subcellularLocation>
        <location evidence="10">Vesicle</location>
    </subcellularLocation>
    <subcellularLocation>
        <location evidence="8 10">Golgi apparatus membrane</location>
        <topology evidence="2">Multi-pass membrane protein</topology>
    </subcellularLocation>
    <subcellularLocation>
        <location evidence="10">Lysosome</location>
    </subcellularLocation>
    <text evidence="10">Travels from endoplasmic reticulum (ER), Golgi to plasma membrane and either back to endosomes and lysosomes, or out into extracellular vesicles (PubMed:30394292). Post-translational modifications control HAS2 trafficking (PubMed:30394292).</text>
</comment>
<comment type="tissue specificity">
    <text>Expressed in fibroblasts.</text>
</comment>
<comment type="induction">
    <text evidence="9">During cell cycle progression is induced at the G1-S and G2-M transitions. Up-regulated in a panel of cancer cell lines.</text>
</comment>
<comment type="PTM">
    <text evidence="10 11">Phosphorylation at Thr-328 is essential for hyaluronan synthase activity (PubMed:32993960). Phosphorylation at Thr-110 is required for transport from ER to Golgi (PubMed:30394292).</text>
</comment>
<comment type="PTM">
    <text evidence="6">O-GlcNAcylation at Ser-221 increases the stability of HAS2 and plasma membrane localization.</text>
</comment>
<comment type="PTM">
    <text evidence="4 9">Ubiquitination at Lys-190; this ubiquitination is essential for hyaluronan synthase activity and homo- or hetero-oligomerization. Can also be poly-ubiquitinated (PubMed:20507985). Deubiquitinated by USP17 and USP4. USP17 efficiently removes 'Lys-63'- and 'Lys-48'-linked polyubiquitin chains, whereas USP4 preferentially removes monoubiquitination and, partially, both 'Lys-63'- and 'Lys-48'-linked polyubiquitin chain (PubMed:28604766).</text>
</comment>
<comment type="disease">
    <text evidence="3">A chromosomal aberration involving HAS2 may be a cause of lipoblastomas, which are benign tumors resulting from transformation of adipocytes, usually diagnosed in children. 8q12.1 to 8q24.1 intrachromosomal rearrangement with PLAG1.</text>
</comment>
<comment type="similarity">
    <text evidence="13">Belongs to the NodC/HAS family.</text>
</comment>
<comment type="online information" name="Atlas of Genetics and Cytogenetics in Oncology and Haematology">
    <link uri="https://atlasgeneticsoncology.org/gene/412/HAS2"/>
</comment>
<feature type="chain" id="PRO_0000197173" description="Hyaluronan synthase 2">
    <location>
        <begin position="1"/>
        <end position="552"/>
    </location>
</feature>
<feature type="topological domain" description="Cytoplasmic" evidence="2">
    <location>
        <begin position="1"/>
        <end position="11"/>
    </location>
</feature>
<feature type="transmembrane region" description="Helical; Name=1" evidence="2">
    <location>
        <begin position="12"/>
        <end position="32"/>
    </location>
</feature>
<feature type="topological domain" description="Extracellular" evidence="2">
    <location>
        <begin position="33"/>
        <end position="45"/>
    </location>
</feature>
<feature type="transmembrane region" description="Helical; Name=2" evidence="2">
    <location>
        <begin position="46"/>
        <end position="66"/>
    </location>
</feature>
<feature type="topological domain" description="Cytoplasmic" evidence="2">
    <location>
        <begin position="67"/>
        <end position="374"/>
    </location>
</feature>
<feature type="transmembrane region" description="Helical; Name=3" evidence="2">
    <location>
        <begin position="375"/>
        <end position="395"/>
    </location>
</feature>
<feature type="topological domain" description="Extracellular" evidence="2">
    <location>
        <begin position="396"/>
        <end position="402"/>
    </location>
</feature>
<feature type="transmembrane region" description="Helical; Name=4" evidence="2">
    <location>
        <begin position="403"/>
        <end position="423"/>
    </location>
</feature>
<feature type="topological domain" description="Cytoplasmic" evidence="2">
    <location>
        <begin position="424"/>
        <end position="429"/>
    </location>
</feature>
<feature type="transmembrane region" description="Helical; Name=5" evidence="2">
    <location>
        <begin position="430"/>
        <end position="450"/>
    </location>
</feature>
<feature type="topological domain" description="Extracellular" evidence="2">
    <location>
        <begin position="451"/>
        <end position="475"/>
    </location>
</feature>
<feature type="transmembrane region" description="Helical; Name=6" evidence="2">
    <location>
        <begin position="476"/>
        <end position="496"/>
    </location>
</feature>
<feature type="topological domain" description="Cytoplasmic" evidence="2">
    <location>
        <begin position="497"/>
        <end position="510"/>
    </location>
</feature>
<feature type="transmembrane region" description="Helical; Name=7" evidence="2">
    <location>
        <begin position="511"/>
        <end position="531"/>
    </location>
</feature>
<feature type="topological domain" description="Extracellular" evidence="2">
    <location>
        <begin position="532"/>
        <end position="552"/>
    </location>
</feature>
<feature type="modified residue" description="Phosphothreonine" evidence="5">
    <location>
        <position position="110"/>
    </location>
</feature>
<feature type="modified residue" description="Phosphothreonine" evidence="11">
    <location>
        <position position="328"/>
    </location>
</feature>
<feature type="glycosylation site" description="O-linked (GlcNAc) serine" evidence="6">
    <location>
        <position position="221"/>
    </location>
</feature>
<feature type="cross-link" description="Glycyl lysine isopeptide (Lys-Gly) (interchain with G-Cter in ubiquitin)" evidence="4">
    <location>
        <position position="190"/>
    </location>
</feature>
<feature type="mutagenesis site" description="Completely abolishes hyaluronan synthase activity. Not detected in cytoplasmic vesicles nor at cell membrane. Inability to travel from ER to Golgi. Unresponsive to AMPK-mediated inactivation." evidence="5 10">
    <original>T</original>
    <variation>A</variation>
    <location>
        <position position="110"/>
    </location>
</feature>
<feature type="mutagenesis site" description="Completely abolishes hyaluronan synthase activity. Cumulates at plasma membrane." evidence="4 10">
    <original>K</original>
    <variation>R</variation>
    <location>
        <position position="190"/>
    </location>
</feature>
<feature type="mutagenesis site" description="Prevents O-GlcNAcylation. Increases protein stability. Reduces hyaluronan synthase activity." evidence="6 10">
    <original>S</original>
    <variation>A</variation>
    <location>
        <position position="221"/>
    </location>
</feature>
<feature type="mutagenesis site" description="Increases protein degradation. Abolishes hyaluronan synthase activity. Does not affect subcellular location." evidence="10">
    <original>S</original>
    <variation>D</variation>
    <location>
        <position position="221"/>
    </location>
</feature>
<feature type="mutagenesis site" description="Increases protein degradation. Abolishes hyaluronan synthase activity. Does not affect subcellular location." evidence="10">
    <original>S</original>
    <variation>E</variation>
    <location>
        <position position="221"/>
    </location>
</feature>
<feature type="mutagenesis site" description="Abolishes hyaluronan synthase activity." evidence="11">
    <original>T</original>
    <variation>A</variation>
    <location>
        <position position="328"/>
    </location>
</feature>
<reference key="1">
    <citation type="journal article" date="1996" name="J. Biol. Chem.">
        <title>Molecular identification of a putative human hyaluronan synthase.</title>
        <authorList>
            <person name="Watanabe K."/>
            <person name="Yamaguchi Y."/>
        </authorList>
    </citation>
    <scope>NUCLEOTIDE SEQUENCE [MRNA]</scope>
    <scope>FUNCTION</scope>
    <scope>SUBCELLULAR LOCATION</scope>
    <source>
        <tissue>Brain</tissue>
    </source>
</reference>
<reference key="2">
    <citation type="journal article" date="2004" name="Genome Res.">
        <title>The status, quality, and expansion of the NIH full-length cDNA project: the Mammalian Gene Collection (MGC).</title>
        <authorList>
            <consortium name="The MGC Project Team"/>
        </authorList>
    </citation>
    <scope>NUCLEOTIDE SEQUENCE [LARGE SCALE MRNA]</scope>
</reference>
<reference key="3">
    <citation type="journal article" date="2005" name="Cancer Genet. Cytogenet.">
        <title>PLAG1-HAS2 fusion in lipoblastoma with masked 8q intrachromosomal rearrangement.</title>
        <authorList>
            <person name="Morerio C."/>
            <person name="Rapella A."/>
            <person name="Rosanda C."/>
            <person name="Tassano E."/>
            <person name="Gambini C."/>
            <person name="Romagnoli G."/>
            <person name="Panarello C."/>
        </authorList>
    </citation>
    <scope>CHROMOSOMAL REARRANGEMENT WITH PLAG1</scope>
</reference>
<reference key="4">
    <citation type="journal article" date="2013" name="J. Biol. Chem.">
        <title>Hyaluronan synthase 1 (HAS1) requires higher cellular UDP-GlcNAc concentration than HAS2 and HAS3.</title>
        <authorList>
            <person name="Rilla K."/>
            <person name="Oikari S."/>
            <person name="Jokela T.A."/>
            <person name="Hyttinen J.M."/>
            <person name="Kaernae R."/>
            <person name="Tammi R.H."/>
            <person name="Tammi M.I."/>
        </authorList>
    </citation>
    <scope>FUNCTION</scope>
    <scope>CATALYTIC ACTIVITY</scope>
    <scope>ACTIVITY REGULATION</scope>
</reference>
<reference key="5">
    <citation type="journal article" date="2010" name="J. Biol. Chem.">
        <title>The activity of hyaluronan synthase 2 is regulated by dimerization and ubiquitination.</title>
        <authorList>
            <person name="Karousou E."/>
            <person name="Kamiryo M."/>
            <person name="Skandalis S.S."/>
            <person name="Ruusala A."/>
            <person name="Asteriou T."/>
            <person name="Passi A."/>
            <person name="Yamashita H."/>
            <person name="Hellman U."/>
            <person name="Heldin C.H."/>
            <person name="Heldin P."/>
        </authorList>
    </citation>
    <scope>FUNCTION</scope>
    <scope>CATALYTIC ACTIVITY</scope>
    <scope>SUBUNIT</scope>
    <scope>UBIQUITINATION AT LYS-190</scope>
    <scope>MUTAGENESIS OF LYS-190</scope>
    <scope>INTERACTION WITH HAS3</scope>
    <scope>ACTIVITY REGULATION</scope>
</reference>
<reference key="6">
    <citation type="journal article" date="2011" name="J. Biol. Chem.">
        <title>Hyaluronan synthesis is inhibited by adenosine monophosphate-activated protein kinase through the regulation of HAS2 activity in human aortic smooth muscle cells.</title>
        <authorList>
            <person name="Vigetti D."/>
            <person name="Clerici M."/>
            <person name="Deleonibus S."/>
            <person name="Karousou E."/>
            <person name="Viola M."/>
            <person name="Moretto P."/>
            <person name="Heldin P."/>
            <person name="Hascall V.C."/>
            <person name="De Luca G."/>
            <person name="Passi A."/>
        </authorList>
    </citation>
    <scope>PHOSPHORYLATION AT THR-110</scope>
    <scope>FUNCTION</scope>
    <scope>CATALYTIC ACTIVITY</scope>
    <scope>MUTAGENESIS OF THR-110</scope>
</reference>
<reference key="7">
    <citation type="journal article" date="2012" name="J. Biol. Chem.">
        <title>Role of UDP-N-acetylglucosamine (GlcNAc) and O-GlcNAcylation of hyaluronan synthase 2 in the control of chondroitin sulfate and hyaluronan synthesis.</title>
        <authorList>
            <person name="Vigetti D."/>
            <person name="Deleonibus S."/>
            <person name="Moretto P."/>
            <person name="Karousou E."/>
            <person name="Viola M."/>
            <person name="Bartolini B."/>
            <person name="Hascall V.C."/>
            <person name="Tammi M."/>
            <person name="De Luca G."/>
            <person name="Passi A."/>
        </authorList>
    </citation>
    <scope>GLYCOSYLATION AT SER-221</scope>
    <scope>FUNCTION</scope>
    <scope>ACTIVITY REGULATION</scope>
    <scope>CATALYTIC ACTIVITY</scope>
    <scope>MUTAGENESIS OF SER-221</scope>
    <scope>SUBCELLULAR LOCATION</scope>
</reference>
<reference key="8">
    <citation type="journal article" date="2015" name="J. Biol. Chem.">
        <title>Fluorescence resonance energy transfer (FRET) and proximity ligation assays reveal functionally relevant homo- and heteromeric complexes among hyaluronan synthases HAS1, HAS2, and HAS3.</title>
        <authorList>
            <person name="Bart G."/>
            <person name="Vico N.O."/>
            <person name="Hassinen A."/>
            <person name="Pujol F.M."/>
            <person name="Deen A.J."/>
            <person name="Ruusala A."/>
            <person name="Tammi R.H."/>
            <person name="Squire A."/>
            <person name="Heldin P."/>
            <person name="Kellokumpu S."/>
            <person name="Tammi M.I."/>
        </authorList>
    </citation>
    <scope>SUBUNIT</scope>
    <scope>INTERACTION WITH HAS1 AND HAS3</scope>
    <scope>SUBCELLULAR LOCATION</scope>
</reference>
<reference key="9">
    <citation type="journal article" date="2017" name="Oncogenesis">
        <title>The deubiquitinating enzymes USP4 and USP17 target hyaluronan synthase 2 and differentially affect its function.</title>
        <authorList>
            <person name="Mehic M."/>
            <person name="de Sa V.K."/>
            <person name="Hebestreit S."/>
            <person name="Heldin C.H."/>
            <person name="Heldin P."/>
        </authorList>
    </citation>
    <scope>DEUBIQUITINATION BY USP4</scope>
    <scope>INDUCTION</scope>
</reference>
<reference key="10">
    <citation type="journal article" date="2019" name="Matrix Biol.">
        <title>Effects of mutations in the post-translational modification sites on the trafficking of hyaluronan synthase 2 (HAS2).</title>
        <authorList>
            <person name="Melero-Fernandez de Mera R.M."/>
            <person name="Arasu U.T."/>
            <person name="Kaernae R."/>
            <person name="Oikari S."/>
            <person name="Rilla K."/>
            <person name="Vigetti D."/>
            <person name="Passi A."/>
            <person name="Heldin P."/>
            <person name="Tammi M.I."/>
            <person name="Deen A.J."/>
        </authorList>
    </citation>
    <scope>SUBCELLULAR LOCATION</scope>
    <scope>MUTAGENESIS OF THR-110; LYS-190 AND SER-221</scope>
    <scope>ACTIVITY REGULATION</scope>
    <scope>FUNCTION</scope>
    <scope>CATALYTIC ACTIVITY</scope>
</reference>
<reference key="11">
    <citation type="journal article" date="2020" name="Biochem. Biophys. Res. Commun.">
        <title>Phosphorylation of Thr328 in hyaluronan synthase 2 is essential for hyaluronan synthesis.</title>
        <authorList>
            <person name="Kasai K."/>
            <person name="Kuroda Y."/>
            <person name="Takabuchi Y."/>
            <person name="Nitta A."/>
            <person name="Kobayashi T."/>
            <person name="Nozaka H."/>
            <person name="Miura T."/>
            <person name="Nakamura T."/>
        </authorList>
    </citation>
    <scope>FUNCTION</scope>
    <scope>CATALYTIC ACTIVITY</scope>
    <scope>ACTIVITY REGULATION</scope>
    <scope>PHOSPHORYLATION AT THR-328</scope>
    <scope>MUTAGENESIS OF THR-328</scope>
</reference>
<sequence length="552" mass="63566">MHCERFLCILRIIGTTLFGVSLLLGITAAYIVGYQFIQTDNYYFSFGLYGAFLASHLIIQSLFAFLEHRKMKKSLETPIKLNKTVALCIAAYQEDPDYLRKCLQSVKRLTYPGIKVVMVIDGNSEDDLYMMDIFSEVMGRDKSATYIWKNNFHEKGPGETDESHKESSQHVTQLVLSNKSICIMQKWGGKREVMYTAFRALGRSVDYVQVCDSDTMLDPASSVEMVKVLEEDPMVGGVGGDVQILNKYDSWISFLSSVRYWMAFNIERACQSYFGCVQCISGPLGMYRNSLLHEFVEDWYNQEFMGNQCSFGDDRHLTNRVLSLGYATKYTARSKCLTETPIEYLRWLNQQTRWSKSYFREWLYNAMWFHKHHLWMTYEAIITGFFPFFLIATVIQLFYRGKIWNILLFLLTVQLVGLIKSSFASCLRGNIVMVFMSLYSVLYMSSLLPAKMFAIATINKAGWGTSGRKTIVVNFIGLIPVSVWFTILLGGVIFTIYKESKRPFSESKQTVLIVGTLLYACYWVMLLTLYVVLINKCGRRKKGQQYDMVLDV</sequence>
<proteinExistence type="evidence at protein level"/>
<protein>
    <recommendedName>
        <fullName>Hyaluronan synthase 2</fullName>
        <ecNumber evidence="4 5 7 11 15 16">2.4.1.212</ecNumber>
    </recommendedName>
    <alternativeName>
        <fullName>Hyaluronate synthase 2</fullName>
    </alternativeName>
    <alternativeName>
        <fullName>Hyaluronic acid synthase 2</fullName>
        <shortName>HA synthase 2</shortName>
    </alternativeName>
</protein>
<organism>
    <name type="scientific">Homo sapiens</name>
    <name type="common">Human</name>
    <dbReference type="NCBI Taxonomy" id="9606"/>
    <lineage>
        <taxon>Eukaryota</taxon>
        <taxon>Metazoa</taxon>
        <taxon>Chordata</taxon>
        <taxon>Craniata</taxon>
        <taxon>Vertebrata</taxon>
        <taxon>Euteleostomi</taxon>
        <taxon>Mammalia</taxon>
        <taxon>Eutheria</taxon>
        <taxon>Euarchontoglires</taxon>
        <taxon>Primates</taxon>
        <taxon>Haplorrhini</taxon>
        <taxon>Catarrhini</taxon>
        <taxon>Hominidae</taxon>
        <taxon>Homo</taxon>
    </lineage>
</organism>
<keyword id="KW-1003">Cell membrane</keyword>
<keyword id="KW-0160">Chromosomal rearrangement</keyword>
<keyword id="KW-0256">Endoplasmic reticulum</keyword>
<keyword id="KW-0325">Glycoprotein</keyword>
<keyword id="KW-0328">Glycosyltransferase</keyword>
<keyword id="KW-0333">Golgi apparatus</keyword>
<keyword id="KW-1017">Isopeptide bond</keyword>
<keyword id="KW-0458">Lysosome</keyword>
<keyword id="KW-0472">Membrane</keyword>
<keyword id="KW-0597">Phosphoprotein</keyword>
<keyword id="KW-1267">Proteomics identification</keyword>
<keyword id="KW-1185">Reference proteome</keyword>
<keyword id="KW-0808">Transferase</keyword>
<keyword id="KW-0812">Transmembrane</keyword>
<keyword id="KW-1133">Transmembrane helix</keyword>
<keyword id="KW-0832">Ubl conjugation</keyword>
<evidence type="ECO:0000250" key="1">
    <source>
        <dbReference type="UniProtKB" id="P70312"/>
    </source>
</evidence>
<evidence type="ECO:0000255" key="2"/>
<evidence type="ECO:0000269" key="3">
    <source>
    </source>
</evidence>
<evidence type="ECO:0000269" key="4">
    <source>
    </source>
</evidence>
<evidence type="ECO:0000269" key="5">
    <source>
    </source>
</evidence>
<evidence type="ECO:0000269" key="6">
    <source>
    </source>
</evidence>
<evidence type="ECO:0000269" key="7">
    <source>
    </source>
</evidence>
<evidence type="ECO:0000269" key="8">
    <source>
    </source>
</evidence>
<evidence type="ECO:0000269" key="9">
    <source>
    </source>
</evidence>
<evidence type="ECO:0000269" key="10">
    <source>
    </source>
</evidence>
<evidence type="ECO:0000269" key="11">
    <source>
    </source>
</evidence>
<evidence type="ECO:0000269" key="12">
    <source>
    </source>
</evidence>
<evidence type="ECO:0000305" key="13"/>
<evidence type="ECO:0000305" key="14">
    <source>
    </source>
</evidence>
<evidence type="ECO:0000305" key="15">
    <source>
    </source>
</evidence>
<evidence type="ECO:0000305" key="16">
    <source>
    </source>
</evidence>
<evidence type="ECO:0000312" key="17">
    <source>
        <dbReference type="HGNC" id="HGNC:4819"/>
    </source>
</evidence>
<accession>Q92819</accession>
<accession>Q32MM3</accession>
<dbReference type="EC" id="2.4.1.212" evidence="4 5 7 11 15 16"/>
<dbReference type="EMBL" id="U54804">
    <property type="protein sequence ID" value="AAC50692.1"/>
    <property type="molecule type" value="mRNA"/>
</dbReference>
<dbReference type="EMBL" id="BC069353">
    <property type="protein sequence ID" value="AAH69353.1"/>
    <property type="molecule type" value="mRNA"/>
</dbReference>
<dbReference type="EMBL" id="BC109071">
    <property type="protein sequence ID" value="AAI09072.1"/>
    <property type="molecule type" value="mRNA"/>
</dbReference>
<dbReference type="EMBL" id="BC109072">
    <property type="protein sequence ID" value="AAI09073.1"/>
    <property type="molecule type" value="mRNA"/>
</dbReference>
<dbReference type="CCDS" id="CCDS6335.1"/>
<dbReference type="RefSeq" id="NP_005319.1">
    <property type="nucleotide sequence ID" value="NM_005328.3"/>
</dbReference>
<dbReference type="SMR" id="Q92819"/>
<dbReference type="BioGRID" id="109287">
    <property type="interactions" value="4"/>
</dbReference>
<dbReference type="ComplexPortal" id="CPX-8422">
    <property type="entry name" value="HAS1-HAS2 hyaluronan biosynthesis complex"/>
</dbReference>
<dbReference type="ComplexPortal" id="CPX-8424">
    <property type="entry name" value="HAS2-HAS3 hyaluronan biosynthesis complex"/>
</dbReference>
<dbReference type="ComplexPortal" id="CPX-8467">
    <property type="entry name" value="HAS2 hyaluronan biosynthesis complex"/>
</dbReference>
<dbReference type="CORUM" id="Q92819"/>
<dbReference type="FunCoup" id="Q92819">
    <property type="interactions" value="273"/>
</dbReference>
<dbReference type="IntAct" id="Q92819">
    <property type="interactions" value="2"/>
</dbReference>
<dbReference type="STRING" id="9606.ENSP00000306991"/>
<dbReference type="CAZy" id="GT2">
    <property type="family name" value="Glycosyltransferase Family 2"/>
</dbReference>
<dbReference type="TCDB" id="4.D.1.1.18">
    <property type="family name" value="the putative vectorial glycosyl polymerization (vgp) family"/>
</dbReference>
<dbReference type="GlyCosmos" id="Q92819">
    <property type="glycosylation" value="1 site, 1 glycan"/>
</dbReference>
<dbReference type="GlyGen" id="Q92819">
    <property type="glycosylation" value="4 sites, 1 O-linked glycan (2 sites)"/>
</dbReference>
<dbReference type="iPTMnet" id="Q92819"/>
<dbReference type="PhosphoSitePlus" id="Q92819"/>
<dbReference type="SwissPalm" id="Q92819"/>
<dbReference type="BioMuta" id="HAS2"/>
<dbReference type="DMDM" id="7387737"/>
<dbReference type="MassIVE" id="Q92819"/>
<dbReference type="PaxDb" id="9606-ENSP00000306991"/>
<dbReference type="PeptideAtlas" id="Q92819"/>
<dbReference type="ProteomicsDB" id="75495"/>
<dbReference type="Antibodypedia" id="55587">
    <property type="antibodies" value="164 antibodies from 24 providers"/>
</dbReference>
<dbReference type="DNASU" id="3037"/>
<dbReference type="Ensembl" id="ENST00000303924.5">
    <property type="protein sequence ID" value="ENSP00000306991.4"/>
    <property type="gene ID" value="ENSG00000170961.7"/>
</dbReference>
<dbReference type="GeneID" id="3037"/>
<dbReference type="KEGG" id="hsa:3037"/>
<dbReference type="MANE-Select" id="ENST00000303924.5">
    <property type="protein sequence ID" value="ENSP00000306991.4"/>
    <property type="RefSeq nucleotide sequence ID" value="NM_005328.3"/>
    <property type="RefSeq protein sequence ID" value="NP_005319.1"/>
</dbReference>
<dbReference type="UCSC" id="uc003yph.3">
    <property type="organism name" value="human"/>
</dbReference>
<dbReference type="AGR" id="HGNC:4819"/>
<dbReference type="CTD" id="3037"/>
<dbReference type="DisGeNET" id="3037"/>
<dbReference type="GeneCards" id="HAS2"/>
<dbReference type="HGNC" id="HGNC:4819">
    <property type="gene designation" value="HAS2"/>
</dbReference>
<dbReference type="HPA" id="ENSG00000170961">
    <property type="expression patterns" value="Tissue enhanced (adipose tissue, urinary bladder)"/>
</dbReference>
<dbReference type="MalaCards" id="HAS2"/>
<dbReference type="MIM" id="601636">
    <property type="type" value="gene"/>
</dbReference>
<dbReference type="neXtProt" id="NX_Q92819"/>
<dbReference type="OpenTargets" id="ENSG00000170961"/>
<dbReference type="PharmGKB" id="PA29195"/>
<dbReference type="VEuPathDB" id="HostDB:ENSG00000170961"/>
<dbReference type="eggNOG" id="KOG2571">
    <property type="taxonomic scope" value="Eukaryota"/>
</dbReference>
<dbReference type="GeneTree" id="ENSGT00390000010337"/>
<dbReference type="HOGENOM" id="CLU_029695_3_0_1"/>
<dbReference type="InParanoid" id="Q92819"/>
<dbReference type="OMA" id="KSATYVW"/>
<dbReference type="OrthoDB" id="9876900at2759"/>
<dbReference type="PAN-GO" id="Q92819">
    <property type="GO annotations" value="5 GO annotations based on evolutionary models"/>
</dbReference>
<dbReference type="PhylomeDB" id="Q92819"/>
<dbReference type="TreeFam" id="TF332506"/>
<dbReference type="BRENDA" id="2.4.1.212">
    <property type="organism ID" value="2681"/>
</dbReference>
<dbReference type="PathwayCommons" id="Q92819"/>
<dbReference type="Reactome" id="R-HSA-2142850">
    <property type="pathway name" value="Hyaluronan biosynthesis and export"/>
</dbReference>
<dbReference type="SignaLink" id="Q92819"/>
<dbReference type="SIGNOR" id="Q92819"/>
<dbReference type="UniPathway" id="UPA00341"/>
<dbReference type="BioGRID-ORCS" id="3037">
    <property type="hits" value="12 hits in 1145 CRISPR screens"/>
</dbReference>
<dbReference type="ChiTaRS" id="HAS2">
    <property type="organism name" value="human"/>
</dbReference>
<dbReference type="GeneWiki" id="HAS2"/>
<dbReference type="GenomeRNAi" id="3037"/>
<dbReference type="Pharos" id="Q92819">
    <property type="development level" value="Tbio"/>
</dbReference>
<dbReference type="PRO" id="PR:Q92819"/>
<dbReference type="Proteomes" id="UP000005640">
    <property type="component" value="Chromosome 8"/>
</dbReference>
<dbReference type="RNAct" id="Q92819">
    <property type="molecule type" value="protein"/>
</dbReference>
<dbReference type="Bgee" id="ENSG00000170961">
    <property type="expression patterns" value="Expressed in cartilage tissue and 132 other cell types or tissues"/>
</dbReference>
<dbReference type="GO" id="GO:0031410">
    <property type="term" value="C:cytoplasmic vesicle"/>
    <property type="evidence" value="ECO:0007669"/>
    <property type="project" value="Ensembl"/>
</dbReference>
<dbReference type="GO" id="GO:0005789">
    <property type="term" value="C:endoplasmic reticulum membrane"/>
    <property type="evidence" value="ECO:0000314"/>
    <property type="project" value="UniProtKB"/>
</dbReference>
<dbReference type="GO" id="GO:1903561">
    <property type="term" value="C:extracellular vesicle"/>
    <property type="evidence" value="ECO:0000314"/>
    <property type="project" value="UniProtKB"/>
</dbReference>
<dbReference type="GO" id="GO:0005794">
    <property type="term" value="C:Golgi apparatus"/>
    <property type="evidence" value="ECO:0000314"/>
    <property type="project" value="UniProtKB"/>
</dbReference>
<dbReference type="GO" id="GO:0000139">
    <property type="term" value="C:Golgi membrane"/>
    <property type="evidence" value="ECO:0007669"/>
    <property type="project" value="UniProtKB-SubCell"/>
</dbReference>
<dbReference type="GO" id="GO:0005764">
    <property type="term" value="C:lysosome"/>
    <property type="evidence" value="ECO:0007669"/>
    <property type="project" value="UniProtKB-SubCell"/>
</dbReference>
<dbReference type="GO" id="GO:0005886">
    <property type="term" value="C:plasma membrane"/>
    <property type="evidence" value="ECO:0000314"/>
    <property type="project" value="UniProtKB"/>
</dbReference>
<dbReference type="GO" id="GO:0044853">
    <property type="term" value="C:plasma membrane raft"/>
    <property type="evidence" value="ECO:0007669"/>
    <property type="project" value="Ensembl"/>
</dbReference>
<dbReference type="GO" id="GO:0050501">
    <property type="term" value="F:hyaluronan synthase activity"/>
    <property type="evidence" value="ECO:0000314"/>
    <property type="project" value="UniProtKB"/>
</dbReference>
<dbReference type="GO" id="GO:0042802">
    <property type="term" value="F:identical protein binding"/>
    <property type="evidence" value="ECO:0000314"/>
    <property type="project" value="UniProtKB"/>
</dbReference>
<dbReference type="GO" id="GO:0036302">
    <property type="term" value="P:atrioventricular canal development"/>
    <property type="evidence" value="ECO:0000250"/>
    <property type="project" value="UniProtKB"/>
</dbReference>
<dbReference type="GO" id="GO:0060349">
    <property type="term" value="P:bone morphogenesis"/>
    <property type="evidence" value="ECO:0007669"/>
    <property type="project" value="Ensembl"/>
</dbReference>
<dbReference type="GO" id="GO:0071498">
    <property type="term" value="P:cellular response to fluid shear stress"/>
    <property type="evidence" value="ECO:0000270"/>
    <property type="project" value="BHF-UCL"/>
</dbReference>
<dbReference type="GO" id="GO:0071347">
    <property type="term" value="P:cellular response to interleukin-1"/>
    <property type="evidence" value="ECO:0000270"/>
    <property type="project" value="BHF-UCL"/>
</dbReference>
<dbReference type="GO" id="GO:0036120">
    <property type="term" value="P:cellular response to platelet-derived growth factor stimulus"/>
    <property type="evidence" value="ECO:0000314"/>
    <property type="project" value="UniProtKB"/>
</dbReference>
<dbReference type="GO" id="GO:0071356">
    <property type="term" value="P:cellular response to tumor necrosis factor"/>
    <property type="evidence" value="ECO:0000270"/>
    <property type="project" value="BHF-UCL"/>
</dbReference>
<dbReference type="GO" id="GO:0090500">
    <property type="term" value="P:endocardial cushion to mesenchymal transition"/>
    <property type="evidence" value="ECO:0000250"/>
    <property type="project" value="UniProtKB"/>
</dbReference>
<dbReference type="GO" id="GO:0044849">
    <property type="term" value="P:estrous cycle"/>
    <property type="evidence" value="ECO:0007669"/>
    <property type="project" value="Ensembl"/>
</dbReference>
<dbReference type="GO" id="GO:0085029">
    <property type="term" value="P:extracellular matrix assembly"/>
    <property type="evidence" value="ECO:0000250"/>
    <property type="project" value="UniProtKB"/>
</dbReference>
<dbReference type="GO" id="GO:0030213">
    <property type="term" value="P:hyaluronan biosynthetic process"/>
    <property type="evidence" value="ECO:0000314"/>
    <property type="project" value="UniProtKB"/>
</dbReference>
<dbReference type="GO" id="GO:0001822">
    <property type="term" value="P:kidney development"/>
    <property type="evidence" value="ECO:0000250"/>
    <property type="project" value="UniProtKB"/>
</dbReference>
<dbReference type="GO" id="GO:0000271">
    <property type="term" value="P:polysaccharide biosynthetic process"/>
    <property type="evidence" value="ECO:0000250"/>
    <property type="project" value="UniProtKB"/>
</dbReference>
<dbReference type="GO" id="GO:0030335">
    <property type="term" value="P:positive regulation of cell migration"/>
    <property type="evidence" value="ECO:0000315"/>
    <property type="project" value="BHF-UCL"/>
</dbReference>
<dbReference type="GO" id="GO:0008284">
    <property type="term" value="P:positive regulation of cell population proliferation"/>
    <property type="evidence" value="ECO:0000315"/>
    <property type="project" value="BHF-UCL"/>
</dbReference>
<dbReference type="GO" id="GO:1900127">
    <property type="term" value="P:positive regulation of hyaluronan biosynthetic process"/>
    <property type="evidence" value="ECO:0007669"/>
    <property type="project" value="Ensembl"/>
</dbReference>
<dbReference type="GO" id="GO:0051549">
    <property type="term" value="P:positive regulation of keratinocyte migration"/>
    <property type="evidence" value="ECO:0007669"/>
    <property type="project" value="Ensembl"/>
</dbReference>
<dbReference type="GO" id="GO:0010838">
    <property type="term" value="P:positive regulation of keratinocyte proliferation"/>
    <property type="evidence" value="ECO:0007669"/>
    <property type="project" value="Ensembl"/>
</dbReference>
<dbReference type="GO" id="GO:1900625">
    <property type="term" value="P:positive regulation of monocyte aggregation"/>
    <property type="evidence" value="ECO:0000315"/>
    <property type="project" value="BHF-UCL"/>
</dbReference>
<dbReference type="GO" id="GO:0014911">
    <property type="term" value="P:positive regulation of smooth muscle cell migration"/>
    <property type="evidence" value="ECO:0007669"/>
    <property type="project" value="Ensembl"/>
</dbReference>
<dbReference type="GO" id="GO:1900026">
    <property type="term" value="P:positive regulation of substrate adhesion-dependent cell spreading"/>
    <property type="evidence" value="ECO:0007669"/>
    <property type="project" value="Ensembl"/>
</dbReference>
<dbReference type="GO" id="GO:0035810">
    <property type="term" value="P:positive regulation of urine volume"/>
    <property type="evidence" value="ECO:0000250"/>
    <property type="project" value="UniProtKB"/>
</dbReference>
<dbReference type="GO" id="GO:1901201">
    <property type="term" value="P:regulation of extracellular matrix assembly"/>
    <property type="evidence" value="ECO:0007669"/>
    <property type="project" value="Ensembl"/>
</dbReference>
<dbReference type="GO" id="GO:0070295">
    <property type="term" value="P:renal water absorption"/>
    <property type="evidence" value="ECO:0000250"/>
    <property type="project" value="UniProtKB"/>
</dbReference>
<dbReference type="GO" id="GO:0001570">
    <property type="term" value="P:vasculogenesis"/>
    <property type="evidence" value="ECO:0000250"/>
    <property type="project" value="UniProtKB"/>
</dbReference>
<dbReference type="CDD" id="cd06434">
    <property type="entry name" value="GT2_HAS"/>
    <property type="match status" value="1"/>
</dbReference>
<dbReference type="Gene3D" id="3.90.550.10">
    <property type="entry name" value="Spore Coat Polysaccharide Biosynthesis Protein SpsA, Chain A"/>
    <property type="match status" value="1"/>
</dbReference>
<dbReference type="InterPro" id="IPR029044">
    <property type="entry name" value="Nucleotide-diphossugar_trans"/>
</dbReference>
<dbReference type="PANTHER" id="PTHR22913">
    <property type="entry name" value="HYALURONAN SYNTHASE"/>
    <property type="match status" value="1"/>
</dbReference>
<dbReference type="PANTHER" id="PTHR22913:SF7">
    <property type="entry name" value="HYALURONAN SYNTHASE 2"/>
    <property type="match status" value="1"/>
</dbReference>
<dbReference type="Pfam" id="PF03142">
    <property type="entry name" value="Chitin_synth_2"/>
    <property type="match status" value="1"/>
</dbReference>
<dbReference type="SUPFAM" id="SSF53448">
    <property type="entry name" value="Nucleotide-diphospho-sugar transferases"/>
    <property type="match status" value="1"/>
</dbReference>
<name>HYAS2_HUMAN</name>
<gene>
    <name evidence="17" type="primary">HAS2</name>
</gene>